<protein>
    <recommendedName>
        <fullName>Cyclin-O protein B</fullName>
    </recommendedName>
</protein>
<feature type="chain" id="PRO_0000430435" description="Cyclin-O protein B">
    <location>
        <begin position="1"/>
        <end position="365"/>
    </location>
</feature>
<feature type="region of interest" description="Disordered" evidence="2">
    <location>
        <begin position="22"/>
        <end position="64"/>
    </location>
</feature>
<feature type="compositionally biased region" description="Basic residues" evidence="2">
    <location>
        <begin position="53"/>
        <end position="64"/>
    </location>
</feature>
<dbReference type="EMBL" id="BC108565">
    <property type="protein sequence ID" value="AAI08566.1"/>
    <property type="molecule type" value="mRNA"/>
</dbReference>
<dbReference type="RefSeq" id="NP_001089865.1">
    <property type="nucleotide sequence ID" value="NM_001096396.1"/>
</dbReference>
<dbReference type="SMR" id="Q32NM1"/>
<dbReference type="DNASU" id="734931"/>
<dbReference type="GeneID" id="734931"/>
<dbReference type="KEGG" id="xla:734931"/>
<dbReference type="AGR" id="Xenbase:XB-GENE-17332754"/>
<dbReference type="CTD" id="734931"/>
<dbReference type="Xenbase" id="XB-GENE-17332754">
    <property type="gene designation" value="ccno.S"/>
</dbReference>
<dbReference type="OMA" id="CSPRISH"/>
<dbReference type="OrthoDB" id="5590282at2759"/>
<dbReference type="Proteomes" id="UP000186698">
    <property type="component" value="Chromosome 1S"/>
</dbReference>
<dbReference type="Bgee" id="734931">
    <property type="expression patterns" value="Expressed in egg cell and 16 other cell types or tissues"/>
</dbReference>
<dbReference type="GO" id="GO:0000307">
    <property type="term" value="C:cyclin-dependent protein kinase holoenzyme complex"/>
    <property type="evidence" value="ECO:0000318"/>
    <property type="project" value="GO_Central"/>
</dbReference>
<dbReference type="GO" id="GO:0005737">
    <property type="term" value="C:cytoplasm"/>
    <property type="evidence" value="ECO:0000318"/>
    <property type="project" value="GO_Central"/>
</dbReference>
<dbReference type="GO" id="GO:0005815">
    <property type="term" value="C:microtubule organizing center"/>
    <property type="evidence" value="ECO:0000318"/>
    <property type="project" value="GO_Central"/>
</dbReference>
<dbReference type="GO" id="GO:0005634">
    <property type="term" value="C:nucleus"/>
    <property type="evidence" value="ECO:0000318"/>
    <property type="project" value="GO_Central"/>
</dbReference>
<dbReference type="GO" id="GO:0016538">
    <property type="term" value="F:cyclin-dependent protein serine/threonine kinase regulator activity"/>
    <property type="evidence" value="ECO:0000318"/>
    <property type="project" value="GO_Central"/>
</dbReference>
<dbReference type="GO" id="GO:0051301">
    <property type="term" value="P:cell division"/>
    <property type="evidence" value="ECO:0007669"/>
    <property type="project" value="UniProtKB-KW"/>
</dbReference>
<dbReference type="GO" id="GO:0060271">
    <property type="term" value="P:cilium assembly"/>
    <property type="evidence" value="ECO:0000315"/>
    <property type="project" value="UniProtKB"/>
</dbReference>
<dbReference type="GO" id="GO:0000082">
    <property type="term" value="P:G1/S transition of mitotic cell cycle"/>
    <property type="evidence" value="ECO:0000318"/>
    <property type="project" value="GO_Central"/>
</dbReference>
<dbReference type="GO" id="GO:1903251">
    <property type="term" value="P:multi-ciliated epithelial cell differentiation"/>
    <property type="evidence" value="ECO:0000315"/>
    <property type="project" value="UniProtKB"/>
</dbReference>
<dbReference type="CDD" id="cd20536">
    <property type="entry name" value="CYCLIN_CCNO_rpt1"/>
    <property type="match status" value="1"/>
</dbReference>
<dbReference type="CDD" id="cd20722">
    <property type="entry name" value="CYCLIN_CCNO_rpt2"/>
    <property type="match status" value="1"/>
</dbReference>
<dbReference type="FunFam" id="1.10.472.10:FF:000064">
    <property type="entry name" value="Cyclin O"/>
    <property type="match status" value="1"/>
</dbReference>
<dbReference type="FunFam" id="1.10.472.10:FF:000061">
    <property type="entry name" value="cyclin-O"/>
    <property type="match status" value="1"/>
</dbReference>
<dbReference type="Gene3D" id="1.10.472.10">
    <property type="entry name" value="Cyclin-like"/>
    <property type="match status" value="2"/>
</dbReference>
<dbReference type="InterPro" id="IPR039361">
    <property type="entry name" value="Cyclin"/>
</dbReference>
<dbReference type="InterPro" id="IPR013763">
    <property type="entry name" value="Cyclin-like_dom"/>
</dbReference>
<dbReference type="InterPro" id="IPR036915">
    <property type="entry name" value="Cyclin-like_sf"/>
</dbReference>
<dbReference type="InterPro" id="IPR004367">
    <property type="entry name" value="Cyclin_C-dom"/>
</dbReference>
<dbReference type="InterPro" id="IPR006671">
    <property type="entry name" value="Cyclin_N"/>
</dbReference>
<dbReference type="InterPro" id="IPR048258">
    <property type="entry name" value="Cyclins_cyclin-box"/>
</dbReference>
<dbReference type="PANTHER" id="PTHR10177">
    <property type="entry name" value="CYCLINS"/>
    <property type="match status" value="1"/>
</dbReference>
<dbReference type="Pfam" id="PF02984">
    <property type="entry name" value="Cyclin_C"/>
    <property type="match status" value="1"/>
</dbReference>
<dbReference type="Pfam" id="PF00134">
    <property type="entry name" value="Cyclin_N"/>
    <property type="match status" value="1"/>
</dbReference>
<dbReference type="SMART" id="SM00385">
    <property type="entry name" value="CYCLIN"/>
    <property type="match status" value="2"/>
</dbReference>
<dbReference type="SMART" id="SM01332">
    <property type="entry name" value="Cyclin_C"/>
    <property type="match status" value="1"/>
</dbReference>
<dbReference type="SUPFAM" id="SSF47954">
    <property type="entry name" value="Cyclin-like"/>
    <property type="match status" value="2"/>
</dbReference>
<dbReference type="PROSITE" id="PS00292">
    <property type="entry name" value="CYCLINS"/>
    <property type="match status" value="1"/>
</dbReference>
<gene>
    <name type="primary">ccno-b</name>
</gene>
<evidence type="ECO:0000250" key="1"/>
<evidence type="ECO:0000256" key="2">
    <source>
        <dbReference type="SAM" id="MobiDB-lite"/>
    </source>
</evidence>
<evidence type="ECO:0000269" key="3">
    <source>
    </source>
</evidence>
<evidence type="ECO:0000305" key="4"/>
<sequence>MVTCSMRCTEEGLLGATLAFSSGKRKRDSVYSPGDATPGDRGEGEPKCPSVGTKKRAKYSRHRKQSLELRSCDSGVADLYETPSPSPVAPSPTHEPWDTCTPMYDGLGLQNFRDYGQDCYTFNKSLEDKFLAVNCLKNQPQIQAESRCKLISWLIPVHRHLNLGFESLCLTVNILDRFLACTPVASDCFQLVGVTSLLIASKQVETRPPRVKQLLALCCDAFSREQLCNLECIILLKLHFRLGAPTINFFLQHFSLLRVTNEESSDTELSETTKSVTVARGIAELSLADYAFNSYSPSLMAVCCLEIADRMLCHRNPIRARVSDYHESLIQECVGKIDLLVSLNQDSLHRLLPSQFAVKSINVDN</sequence>
<reference key="1">
    <citation type="submission" date="2005-11" db="EMBL/GenBank/DDBJ databases">
        <authorList>
            <consortium name="NIH - Xenopus Gene Collection (XGC) project"/>
        </authorList>
    </citation>
    <scope>NUCLEOTIDE SEQUENCE [LARGE SCALE MRNA]</scope>
    <source>
        <tissue>Embryo</tissue>
    </source>
</reference>
<reference key="2">
    <citation type="journal article" date="2014" name="Nat. Genet.">
        <title>Mutations in CCNO result in congenital mucociliary clearance disorder with reduced generation of multiple motile cilia.</title>
        <authorList>
            <person name="Wallmeier J."/>
            <person name="Al-Mutairi D.A."/>
            <person name="Chen C.T."/>
            <person name="Loges N.T."/>
            <person name="Pennekamp P."/>
            <person name="Menchen T."/>
            <person name="Ma L."/>
            <person name="Shamseldin H.E."/>
            <person name="Olbrich H."/>
            <person name="Dougherty G.W."/>
            <person name="Werner C."/>
            <person name="Alsabah B.H."/>
            <person name="Koehler G."/>
            <person name="Jaspers M."/>
            <person name="Boon M."/>
            <person name="Griese M."/>
            <person name="Schmitt-Grohe S."/>
            <person name="Zimmermann T."/>
            <person name="Koerner-Rettberg C."/>
            <person name="Horak E."/>
            <person name="Kintner C."/>
            <person name="Alkuraya F.S."/>
            <person name="Omran H."/>
        </authorList>
    </citation>
    <scope>FUNCTION</scope>
</reference>
<proteinExistence type="evidence at transcript level"/>
<organism>
    <name type="scientific">Xenopus laevis</name>
    <name type="common">African clawed frog</name>
    <dbReference type="NCBI Taxonomy" id="8355"/>
    <lineage>
        <taxon>Eukaryota</taxon>
        <taxon>Metazoa</taxon>
        <taxon>Chordata</taxon>
        <taxon>Craniata</taxon>
        <taxon>Vertebrata</taxon>
        <taxon>Euteleostomi</taxon>
        <taxon>Amphibia</taxon>
        <taxon>Batrachia</taxon>
        <taxon>Anura</taxon>
        <taxon>Pipoidea</taxon>
        <taxon>Pipidae</taxon>
        <taxon>Xenopodinae</taxon>
        <taxon>Xenopus</taxon>
        <taxon>Xenopus</taxon>
    </lineage>
</organism>
<comment type="function">
    <text evidence="3">Specifically required for generation of multiciliated cells, possibly by promoting a cell cycle state compatible with centriole amplification and maturation. Acts downstream of mcidas to promote mother centriole amplification and maturation in preparation for apical docking.</text>
</comment>
<comment type="subcellular location">
    <subcellularLocation>
        <location evidence="1">Cytoplasm</location>
    </subcellularLocation>
    <text evidence="1">Localizes to the apical part of cytoplasm.</text>
</comment>
<comment type="similarity">
    <text evidence="4">Belongs to the cyclin family.</text>
</comment>
<name>CCNOB_XENLA</name>
<accession>Q32NM1</accession>
<keyword id="KW-0131">Cell cycle</keyword>
<keyword id="KW-0132">Cell division</keyword>
<keyword id="KW-0970">Cilium biogenesis/degradation</keyword>
<keyword id="KW-0195">Cyclin</keyword>
<keyword id="KW-0963">Cytoplasm</keyword>
<keyword id="KW-1185">Reference proteome</keyword>